<evidence type="ECO:0000255" key="1">
    <source>
        <dbReference type="HAMAP-Rule" id="MF_00140"/>
    </source>
</evidence>
<organism>
    <name type="scientific">Xanthomonas campestris pv. campestris (strain ATCC 33913 / DSM 3586 / NCPPB 528 / LMG 568 / P 25)</name>
    <dbReference type="NCBI Taxonomy" id="190485"/>
    <lineage>
        <taxon>Bacteria</taxon>
        <taxon>Pseudomonadati</taxon>
        <taxon>Pseudomonadota</taxon>
        <taxon>Gammaproteobacteria</taxon>
        <taxon>Lysobacterales</taxon>
        <taxon>Lysobacteraceae</taxon>
        <taxon>Xanthomonas</taxon>
    </lineage>
</organism>
<accession>Q8P3Z4</accession>
<sequence>MQMTTRVLTGITPSGTPHLGNYVGAIRPAIQASTATDAESFYFLADLHSLIKAQDPARTQRSTLEIAASWLACGLDPDKVWFYRQSDVPETTELMWLLTCVAGKGILNRAHAYKAAMDKNRAEGEDEDAGVTAGLFMYPVLMAADILIFNAHKVPVGRDQIQHIEMARDFAQRFNHVYGQDYFTLPDAVIDEQVATLPGLDGRKMSKSYNNTIPLFAPREELRKLVFSILTDSRAPGEAKDTQGSALFQLYQAFATPQETAAFAQAFADGISWADAKQQLFERIDLEIAPLRARYEALMAEPAKIEATLRAGGARLRARYATPLLAQLRDAVGLRDLSSQASAVGPATAVKAALPVFKQYRESDGQFYFKLHDAAGTLLLQSDGFASPREAGQLIARLKQAEDTTQLQLPGVQLPADAAPVLAALRALREA</sequence>
<protein>
    <recommendedName>
        <fullName evidence="1">Tryptophan--tRNA ligase</fullName>
        <ecNumber evidence="1">6.1.1.2</ecNumber>
    </recommendedName>
    <alternativeName>
        <fullName evidence="1">Tryptophanyl-tRNA synthetase</fullName>
        <shortName evidence="1">TrpRS</shortName>
    </alternativeName>
</protein>
<reference key="1">
    <citation type="journal article" date="2002" name="Nature">
        <title>Comparison of the genomes of two Xanthomonas pathogens with differing host specificities.</title>
        <authorList>
            <person name="da Silva A.C.R."/>
            <person name="Ferro J.A."/>
            <person name="Reinach F.C."/>
            <person name="Farah C.S."/>
            <person name="Furlan L.R."/>
            <person name="Quaggio R.B."/>
            <person name="Monteiro-Vitorello C.B."/>
            <person name="Van Sluys M.A."/>
            <person name="Almeida N.F. Jr."/>
            <person name="Alves L.M.C."/>
            <person name="do Amaral A.M."/>
            <person name="Bertolini M.C."/>
            <person name="Camargo L.E.A."/>
            <person name="Camarotte G."/>
            <person name="Cannavan F."/>
            <person name="Cardozo J."/>
            <person name="Chambergo F."/>
            <person name="Ciapina L.P."/>
            <person name="Cicarelli R.M.B."/>
            <person name="Coutinho L.L."/>
            <person name="Cursino-Santos J.R."/>
            <person name="El-Dorry H."/>
            <person name="Faria J.B."/>
            <person name="Ferreira A.J.S."/>
            <person name="Ferreira R.C.C."/>
            <person name="Ferro M.I.T."/>
            <person name="Formighieri E.F."/>
            <person name="Franco M.C."/>
            <person name="Greggio C.C."/>
            <person name="Gruber A."/>
            <person name="Katsuyama A.M."/>
            <person name="Kishi L.T."/>
            <person name="Leite R.P."/>
            <person name="Lemos E.G.M."/>
            <person name="Lemos M.V.F."/>
            <person name="Locali E.C."/>
            <person name="Machado M.A."/>
            <person name="Madeira A.M.B.N."/>
            <person name="Martinez-Rossi N.M."/>
            <person name="Martins E.C."/>
            <person name="Meidanis J."/>
            <person name="Menck C.F.M."/>
            <person name="Miyaki C.Y."/>
            <person name="Moon D.H."/>
            <person name="Moreira L.M."/>
            <person name="Novo M.T.M."/>
            <person name="Okura V.K."/>
            <person name="Oliveira M.C."/>
            <person name="Oliveira V.R."/>
            <person name="Pereira H.A."/>
            <person name="Rossi A."/>
            <person name="Sena J.A.D."/>
            <person name="Silva C."/>
            <person name="de Souza R.F."/>
            <person name="Spinola L.A.F."/>
            <person name="Takita M.A."/>
            <person name="Tamura R.E."/>
            <person name="Teixeira E.C."/>
            <person name="Tezza R.I.D."/>
            <person name="Trindade dos Santos M."/>
            <person name="Truffi D."/>
            <person name="Tsai S.M."/>
            <person name="White F.F."/>
            <person name="Setubal J.C."/>
            <person name="Kitajima J.P."/>
        </authorList>
    </citation>
    <scope>NUCLEOTIDE SEQUENCE [LARGE SCALE GENOMIC DNA]</scope>
    <source>
        <strain>ATCC 33913 / DSM 3586 / NCPPB 528 / LMG 568 / P 25</strain>
    </source>
</reference>
<dbReference type="EC" id="6.1.1.2" evidence="1"/>
<dbReference type="EMBL" id="AE008922">
    <property type="protein sequence ID" value="AAM43145.1"/>
    <property type="molecule type" value="Genomic_DNA"/>
</dbReference>
<dbReference type="RefSeq" id="NP_639263.1">
    <property type="nucleotide sequence ID" value="NC_003902.1"/>
</dbReference>
<dbReference type="SMR" id="Q8P3Z4"/>
<dbReference type="STRING" id="190485.XCC3923"/>
<dbReference type="EnsemblBacteria" id="AAM43145">
    <property type="protein sequence ID" value="AAM43145"/>
    <property type="gene ID" value="XCC3923"/>
</dbReference>
<dbReference type="KEGG" id="xcc:XCC3923"/>
<dbReference type="PATRIC" id="fig|190485.4.peg.4198"/>
<dbReference type="eggNOG" id="COG0180">
    <property type="taxonomic scope" value="Bacteria"/>
</dbReference>
<dbReference type="HOGENOM" id="CLU_029244_5_1_6"/>
<dbReference type="OrthoDB" id="9801042at2"/>
<dbReference type="Proteomes" id="UP000001010">
    <property type="component" value="Chromosome"/>
</dbReference>
<dbReference type="GO" id="GO:0005829">
    <property type="term" value="C:cytosol"/>
    <property type="evidence" value="ECO:0000318"/>
    <property type="project" value="GO_Central"/>
</dbReference>
<dbReference type="GO" id="GO:0005524">
    <property type="term" value="F:ATP binding"/>
    <property type="evidence" value="ECO:0007669"/>
    <property type="project" value="UniProtKB-UniRule"/>
</dbReference>
<dbReference type="GO" id="GO:0004830">
    <property type="term" value="F:tryptophan-tRNA ligase activity"/>
    <property type="evidence" value="ECO:0000318"/>
    <property type="project" value="GO_Central"/>
</dbReference>
<dbReference type="GO" id="GO:0006436">
    <property type="term" value="P:tryptophanyl-tRNA aminoacylation"/>
    <property type="evidence" value="ECO:0000318"/>
    <property type="project" value="GO_Central"/>
</dbReference>
<dbReference type="CDD" id="cd00806">
    <property type="entry name" value="TrpRS_core"/>
    <property type="match status" value="1"/>
</dbReference>
<dbReference type="FunFam" id="1.10.240.10:FF:000005">
    <property type="entry name" value="Tryptophan--tRNA ligase"/>
    <property type="match status" value="1"/>
</dbReference>
<dbReference type="FunFam" id="3.40.50.620:FF:000144">
    <property type="entry name" value="Tryptophan--tRNA ligase"/>
    <property type="match status" value="1"/>
</dbReference>
<dbReference type="Gene3D" id="2.30.29.80">
    <property type="match status" value="1"/>
</dbReference>
<dbReference type="Gene3D" id="3.40.50.620">
    <property type="entry name" value="HUPs"/>
    <property type="match status" value="1"/>
</dbReference>
<dbReference type="Gene3D" id="1.10.240.10">
    <property type="entry name" value="Tyrosyl-Transfer RNA Synthetase"/>
    <property type="match status" value="1"/>
</dbReference>
<dbReference type="HAMAP" id="MF_00140_B">
    <property type="entry name" value="Trp_tRNA_synth_B"/>
    <property type="match status" value="1"/>
</dbReference>
<dbReference type="InterPro" id="IPR001412">
    <property type="entry name" value="aa-tRNA-synth_I_CS"/>
</dbReference>
<dbReference type="InterPro" id="IPR002305">
    <property type="entry name" value="aa-tRNA-synth_Ic"/>
</dbReference>
<dbReference type="InterPro" id="IPR014729">
    <property type="entry name" value="Rossmann-like_a/b/a_fold"/>
</dbReference>
<dbReference type="InterPro" id="IPR002306">
    <property type="entry name" value="Trp-tRNA-ligase"/>
</dbReference>
<dbReference type="InterPro" id="IPR024109">
    <property type="entry name" value="Trp-tRNA-ligase_bac-type"/>
</dbReference>
<dbReference type="InterPro" id="IPR050203">
    <property type="entry name" value="Trp-tRNA_synthetase"/>
</dbReference>
<dbReference type="InterPro" id="IPR036913">
    <property type="entry name" value="YegP-like_sf"/>
</dbReference>
<dbReference type="NCBIfam" id="NF008923">
    <property type="entry name" value="PRK12284.1"/>
    <property type="match status" value="1"/>
</dbReference>
<dbReference type="NCBIfam" id="TIGR00233">
    <property type="entry name" value="trpS"/>
    <property type="match status" value="1"/>
</dbReference>
<dbReference type="PANTHER" id="PTHR43766">
    <property type="entry name" value="TRYPTOPHAN--TRNA LIGASE, MITOCHONDRIAL"/>
    <property type="match status" value="1"/>
</dbReference>
<dbReference type="PANTHER" id="PTHR43766:SF1">
    <property type="entry name" value="TRYPTOPHAN--TRNA LIGASE, MITOCHONDRIAL"/>
    <property type="match status" value="1"/>
</dbReference>
<dbReference type="Pfam" id="PF00579">
    <property type="entry name" value="tRNA-synt_1b"/>
    <property type="match status" value="1"/>
</dbReference>
<dbReference type="PRINTS" id="PR01039">
    <property type="entry name" value="TRNASYNTHTRP"/>
</dbReference>
<dbReference type="SUPFAM" id="SSF52374">
    <property type="entry name" value="Nucleotidylyl transferase"/>
    <property type="match status" value="1"/>
</dbReference>
<dbReference type="SUPFAM" id="SSF160113">
    <property type="entry name" value="YegP-like"/>
    <property type="match status" value="1"/>
</dbReference>
<dbReference type="PROSITE" id="PS00178">
    <property type="entry name" value="AA_TRNA_LIGASE_I"/>
    <property type="match status" value="1"/>
</dbReference>
<comment type="function">
    <text evidence="1">Catalyzes the attachment of tryptophan to tRNA(Trp).</text>
</comment>
<comment type="catalytic activity">
    <reaction evidence="1">
        <text>tRNA(Trp) + L-tryptophan + ATP = L-tryptophyl-tRNA(Trp) + AMP + diphosphate + H(+)</text>
        <dbReference type="Rhea" id="RHEA:24080"/>
        <dbReference type="Rhea" id="RHEA-COMP:9671"/>
        <dbReference type="Rhea" id="RHEA-COMP:9705"/>
        <dbReference type="ChEBI" id="CHEBI:15378"/>
        <dbReference type="ChEBI" id="CHEBI:30616"/>
        <dbReference type="ChEBI" id="CHEBI:33019"/>
        <dbReference type="ChEBI" id="CHEBI:57912"/>
        <dbReference type="ChEBI" id="CHEBI:78442"/>
        <dbReference type="ChEBI" id="CHEBI:78535"/>
        <dbReference type="ChEBI" id="CHEBI:456215"/>
        <dbReference type="EC" id="6.1.1.2"/>
    </reaction>
</comment>
<comment type="subunit">
    <text evidence="1">Homodimer.</text>
</comment>
<comment type="subcellular location">
    <subcellularLocation>
        <location evidence="1">Cytoplasm</location>
    </subcellularLocation>
</comment>
<comment type="similarity">
    <text evidence="1">Belongs to the class-I aminoacyl-tRNA synthetase family.</text>
</comment>
<proteinExistence type="inferred from homology"/>
<gene>
    <name evidence="1" type="primary">trpS</name>
    <name type="ordered locus">XCC3923</name>
</gene>
<keyword id="KW-0030">Aminoacyl-tRNA synthetase</keyword>
<keyword id="KW-0067">ATP-binding</keyword>
<keyword id="KW-0963">Cytoplasm</keyword>
<keyword id="KW-0436">Ligase</keyword>
<keyword id="KW-0547">Nucleotide-binding</keyword>
<keyword id="KW-0648">Protein biosynthesis</keyword>
<keyword id="KW-1185">Reference proteome</keyword>
<feature type="chain" id="PRO_0000136713" description="Tryptophan--tRNA ligase">
    <location>
        <begin position="1"/>
        <end position="431"/>
    </location>
</feature>
<feature type="short sequence motif" description="'HIGH' region" evidence="1">
    <location>
        <begin position="13"/>
        <end position="21"/>
    </location>
</feature>
<feature type="short sequence motif" description="'KMSKS' region" evidence="1">
    <location>
        <begin position="204"/>
        <end position="208"/>
    </location>
</feature>
<feature type="binding site" evidence="1">
    <location>
        <begin position="12"/>
        <end position="14"/>
    </location>
    <ligand>
        <name>ATP</name>
        <dbReference type="ChEBI" id="CHEBI:30616"/>
    </ligand>
</feature>
<feature type="binding site" evidence="1">
    <location>
        <begin position="20"/>
        <end position="21"/>
    </location>
    <ligand>
        <name>ATP</name>
        <dbReference type="ChEBI" id="CHEBI:30616"/>
    </ligand>
</feature>
<feature type="binding site" evidence="1">
    <location>
        <position position="145"/>
    </location>
    <ligand>
        <name>L-tryptophan</name>
        <dbReference type="ChEBI" id="CHEBI:57912"/>
    </ligand>
</feature>
<feature type="binding site" evidence="1">
    <location>
        <begin position="157"/>
        <end position="159"/>
    </location>
    <ligand>
        <name>ATP</name>
        <dbReference type="ChEBI" id="CHEBI:30616"/>
    </ligand>
</feature>
<feature type="binding site" evidence="1">
    <location>
        <position position="197"/>
    </location>
    <ligand>
        <name>ATP</name>
        <dbReference type="ChEBI" id="CHEBI:30616"/>
    </ligand>
</feature>
<feature type="binding site" evidence="1">
    <location>
        <begin position="204"/>
        <end position="208"/>
    </location>
    <ligand>
        <name>ATP</name>
        <dbReference type="ChEBI" id="CHEBI:30616"/>
    </ligand>
</feature>
<name>SYW_XANCP</name>